<evidence type="ECO:0000255" key="1">
    <source>
        <dbReference type="HAMAP-Rule" id="MF_00259"/>
    </source>
</evidence>
<evidence type="ECO:0000305" key="2"/>
<reference key="1">
    <citation type="journal article" date="1998" name="Nature">
        <title>The complete genome of the hyperthermophilic bacterium Aquifex aeolicus.</title>
        <authorList>
            <person name="Deckert G."/>
            <person name="Warren P.V."/>
            <person name="Gaasterland T."/>
            <person name="Young W.G."/>
            <person name="Lenox A.L."/>
            <person name="Graham D.E."/>
            <person name="Overbeek R."/>
            <person name="Snead M.A."/>
            <person name="Keller M."/>
            <person name="Aujay M."/>
            <person name="Huber R."/>
            <person name="Feldman R.A."/>
            <person name="Short J.M."/>
            <person name="Olsen G.J."/>
            <person name="Swanson R.V."/>
        </authorList>
    </citation>
    <scope>NUCLEOTIDE SEQUENCE [LARGE SCALE GENOMIC DNA]</scope>
    <source>
        <strain>VF5</strain>
    </source>
</reference>
<proteinExistence type="inferred from homology"/>
<name>GCST_AQUAE</name>
<sequence length="350" mass="40336">MILFYFMQTPLYYVHKHLKAKFTNFAGWTMPLQYTSIIEEVRAVRXRAGVFDISHMGRLLIEDPEKKLQYFTTNNLDKLSVGKVQYNLLPNEKGGIKDDVTVYMLSEIEFFLCVNAANRQKVINWLSPHLKLRDLSGELVQIALQGPKSEEIISKFYPVSDLKYYRFKVFDKTIISRTGYTGEDGFEIYVSPEEGKELFLELVKLAKPCGLGARDVLRIEAGLPLYGNELSEEITPIEVNLEKFVDFSKEFIGKEAMLKKKVKKKLFGLELTEKGIPRKGYRVFKGDREIGWISSGTYSPTLNKGIALCFVDIEERKEGNEVEIEVRGRRVRGVLRKYPFVRTPAGRYQK</sequence>
<accession>O67441</accession>
<dbReference type="EC" id="2.1.2.10" evidence="1"/>
<dbReference type="EMBL" id="AE000657">
    <property type="protein sequence ID" value="AAC07401.1"/>
    <property type="status" value="ALT_FRAME"/>
    <property type="molecule type" value="Genomic_DNA"/>
</dbReference>
<dbReference type="PIR" id="G70426">
    <property type="entry name" value="G70426"/>
</dbReference>
<dbReference type="FunCoup" id="O67441">
    <property type="interactions" value="428"/>
</dbReference>
<dbReference type="STRING" id="224324.aq_1458"/>
<dbReference type="EnsemblBacteria" id="AAC07401">
    <property type="protein sequence ID" value="AAC07401"/>
    <property type="gene ID" value="aq_1458"/>
</dbReference>
<dbReference type="eggNOG" id="COG0404">
    <property type="taxonomic scope" value="Bacteria"/>
</dbReference>
<dbReference type="HOGENOM" id="CLU_007884_10_2_0"/>
<dbReference type="InParanoid" id="O67441"/>
<dbReference type="Proteomes" id="UP000000798">
    <property type="component" value="Chromosome"/>
</dbReference>
<dbReference type="GO" id="GO:0005829">
    <property type="term" value="C:cytosol"/>
    <property type="evidence" value="ECO:0000318"/>
    <property type="project" value="GO_Central"/>
</dbReference>
<dbReference type="GO" id="GO:0005960">
    <property type="term" value="C:glycine cleavage complex"/>
    <property type="evidence" value="ECO:0007669"/>
    <property type="project" value="InterPro"/>
</dbReference>
<dbReference type="GO" id="GO:0004047">
    <property type="term" value="F:aminomethyltransferase activity"/>
    <property type="evidence" value="ECO:0007669"/>
    <property type="project" value="UniProtKB-UniRule"/>
</dbReference>
<dbReference type="GO" id="GO:0008483">
    <property type="term" value="F:transaminase activity"/>
    <property type="evidence" value="ECO:0007669"/>
    <property type="project" value="UniProtKB-KW"/>
</dbReference>
<dbReference type="GO" id="GO:0019464">
    <property type="term" value="P:glycine decarboxylation via glycine cleavage system"/>
    <property type="evidence" value="ECO:0007669"/>
    <property type="project" value="UniProtKB-UniRule"/>
</dbReference>
<dbReference type="FunFam" id="2.40.30.110:FF:000003">
    <property type="entry name" value="Aminomethyltransferase"/>
    <property type="match status" value="1"/>
</dbReference>
<dbReference type="Gene3D" id="2.40.30.110">
    <property type="entry name" value="Aminomethyltransferase beta-barrel domains"/>
    <property type="match status" value="1"/>
</dbReference>
<dbReference type="Gene3D" id="3.30.70.1400">
    <property type="entry name" value="Aminomethyltransferase beta-barrel domains"/>
    <property type="match status" value="1"/>
</dbReference>
<dbReference type="Gene3D" id="4.10.1250.10">
    <property type="entry name" value="Aminomethyltransferase fragment"/>
    <property type="match status" value="1"/>
</dbReference>
<dbReference type="Gene3D" id="3.30.1360.120">
    <property type="entry name" value="Probable tRNA modification gtpase trme, domain 1"/>
    <property type="match status" value="1"/>
</dbReference>
<dbReference type="HAMAP" id="MF_00259">
    <property type="entry name" value="GcvT"/>
    <property type="match status" value="1"/>
</dbReference>
<dbReference type="InterPro" id="IPR006223">
    <property type="entry name" value="GCS_T"/>
</dbReference>
<dbReference type="InterPro" id="IPR022903">
    <property type="entry name" value="GCS_T_bac"/>
</dbReference>
<dbReference type="InterPro" id="IPR013977">
    <property type="entry name" value="GCST_C"/>
</dbReference>
<dbReference type="InterPro" id="IPR006222">
    <property type="entry name" value="GCV_T_N"/>
</dbReference>
<dbReference type="InterPro" id="IPR028896">
    <property type="entry name" value="GcvT/YgfZ/DmdA"/>
</dbReference>
<dbReference type="InterPro" id="IPR029043">
    <property type="entry name" value="GcvT/YgfZ_C"/>
</dbReference>
<dbReference type="InterPro" id="IPR027266">
    <property type="entry name" value="TrmE/GcvT_dom1"/>
</dbReference>
<dbReference type="NCBIfam" id="TIGR00528">
    <property type="entry name" value="gcvT"/>
    <property type="match status" value="1"/>
</dbReference>
<dbReference type="NCBIfam" id="NF001567">
    <property type="entry name" value="PRK00389.1"/>
    <property type="match status" value="1"/>
</dbReference>
<dbReference type="PANTHER" id="PTHR43757">
    <property type="entry name" value="AMINOMETHYLTRANSFERASE"/>
    <property type="match status" value="1"/>
</dbReference>
<dbReference type="PANTHER" id="PTHR43757:SF2">
    <property type="entry name" value="AMINOMETHYLTRANSFERASE, MITOCHONDRIAL"/>
    <property type="match status" value="1"/>
</dbReference>
<dbReference type="Pfam" id="PF01571">
    <property type="entry name" value="GCV_T"/>
    <property type="match status" value="1"/>
</dbReference>
<dbReference type="Pfam" id="PF08669">
    <property type="entry name" value="GCV_T_C"/>
    <property type="match status" value="1"/>
</dbReference>
<dbReference type="PIRSF" id="PIRSF006487">
    <property type="entry name" value="GcvT"/>
    <property type="match status" value="1"/>
</dbReference>
<dbReference type="SUPFAM" id="SSF101790">
    <property type="entry name" value="Aminomethyltransferase beta-barrel domain"/>
    <property type="match status" value="1"/>
</dbReference>
<dbReference type="SUPFAM" id="SSF103025">
    <property type="entry name" value="Folate-binding domain"/>
    <property type="match status" value="1"/>
</dbReference>
<keyword id="KW-0032">Aminotransferase</keyword>
<keyword id="KW-1185">Reference proteome</keyword>
<keyword id="KW-0808">Transferase</keyword>
<feature type="chain" id="PRO_0000122534" description="Aminomethyltransferase">
    <location>
        <begin position="1"/>
        <end position="350"/>
    </location>
</feature>
<organism>
    <name type="scientific">Aquifex aeolicus (strain VF5)</name>
    <dbReference type="NCBI Taxonomy" id="224324"/>
    <lineage>
        <taxon>Bacteria</taxon>
        <taxon>Pseudomonadati</taxon>
        <taxon>Aquificota</taxon>
        <taxon>Aquificia</taxon>
        <taxon>Aquificales</taxon>
        <taxon>Aquificaceae</taxon>
        <taxon>Aquifex</taxon>
    </lineage>
</organism>
<protein>
    <recommendedName>
        <fullName evidence="1">Aminomethyltransferase</fullName>
        <ecNumber evidence="1">2.1.2.10</ecNumber>
    </recommendedName>
    <alternativeName>
        <fullName evidence="1">Glycine cleavage system T protein</fullName>
    </alternativeName>
</protein>
<comment type="function">
    <text evidence="1">The glycine cleavage system catalyzes the degradation of glycine.</text>
</comment>
<comment type="catalytic activity">
    <reaction evidence="1">
        <text>N(6)-[(R)-S(8)-aminomethyldihydrolipoyl]-L-lysyl-[protein] + (6S)-5,6,7,8-tetrahydrofolate = N(6)-[(R)-dihydrolipoyl]-L-lysyl-[protein] + (6R)-5,10-methylene-5,6,7,8-tetrahydrofolate + NH4(+)</text>
        <dbReference type="Rhea" id="RHEA:16945"/>
        <dbReference type="Rhea" id="RHEA-COMP:10475"/>
        <dbReference type="Rhea" id="RHEA-COMP:10492"/>
        <dbReference type="ChEBI" id="CHEBI:15636"/>
        <dbReference type="ChEBI" id="CHEBI:28938"/>
        <dbReference type="ChEBI" id="CHEBI:57453"/>
        <dbReference type="ChEBI" id="CHEBI:83100"/>
        <dbReference type="ChEBI" id="CHEBI:83143"/>
        <dbReference type="EC" id="2.1.2.10"/>
    </reaction>
</comment>
<comment type="subunit">
    <text evidence="1">The glycine cleavage system is composed of four proteins: P, T, L and H.</text>
</comment>
<comment type="similarity">
    <text evidence="1">Belongs to the GcvT family.</text>
</comment>
<comment type="sequence caution" evidence="2">
    <conflict type="frameshift">
        <sequence resource="EMBL-CDS" id="AAC07401"/>
    </conflict>
</comment>
<gene>
    <name evidence="1" type="primary">gcvT</name>
    <name type="ordered locus">aq_1458</name>
</gene>